<proteinExistence type="evidence at protein level"/>
<protein>
    <recommendedName>
        <fullName evidence="11 12">Epithelial sodium channel subunit delta</fullName>
        <shortName>Delta-ENaC</shortName>
        <shortName>ENaCD</shortName>
        <shortName>Epithelial Na(+) channel subunit delta</shortName>
    </recommendedName>
    <alternativeName>
        <fullName evidence="13">Amiloride-sensitive sodium channel subunit delta</fullName>
    </alternativeName>
    <alternativeName>
        <fullName>Delta-NaCH</fullName>
    </alternativeName>
    <alternativeName>
        <fullName>Nonvoltage-gated sodium channel 1 subunit delta</fullName>
    </alternativeName>
    <alternativeName>
        <fullName>SCNED</fullName>
    </alternativeName>
</protein>
<name>SCNND_HUMAN</name>
<feature type="chain" id="PRO_0000181282" description="Epithelial sodium channel subunit delta">
    <location>
        <begin position="1"/>
        <end position="802"/>
    </location>
</feature>
<feature type="topological domain" description="Cytoplasmic" evidence="6">
    <location>
        <begin position="1"/>
        <end position="250"/>
    </location>
</feature>
<feature type="transmembrane region" description="Helical; Name=1" evidence="1">
    <location>
        <begin position="251"/>
        <end position="271"/>
    </location>
</feature>
<feature type="topological domain" description="Extracellular" evidence="6">
    <location>
        <begin position="272"/>
        <end position="694"/>
    </location>
</feature>
<feature type="transmembrane region" description="Helical; Name=2" evidence="1">
    <location>
        <begin position="695"/>
        <end position="715"/>
    </location>
</feature>
<feature type="topological domain" description="Cytoplasmic" evidence="6">
    <location>
        <begin position="716"/>
        <end position="802"/>
    </location>
</feature>
<feature type="region of interest" description="Disordered" evidence="2">
    <location>
        <begin position="145"/>
        <end position="211"/>
    </location>
</feature>
<feature type="region of interest" description="Disordered" evidence="2">
    <location>
        <begin position="738"/>
        <end position="777"/>
    </location>
</feature>
<feature type="compositionally biased region" description="Basic residues" evidence="2">
    <location>
        <begin position="166"/>
        <end position="176"/>
    </location>
</feature>
<feature type="compositionally biased region" description="Pro residues" evidence="2">
    <location>
        <begin position="192"/>
        <end position="205"/>
    </location>
</feature>
<feature type="glycosylation site" description="N-linked (GlcNAc...) asparagine" evidence="1">
    <location>
        <position position="330"/>
    </location>
</feature>
<feature type="glycosylation site" description="N-linked (GlcNAc...) asparagine" evidence="1">
    <location>
        <position position="548"/>
    </location>
</feature>
<feature type="splice variant" id="VSP_060000" description="In isoform 1.">
    <location>
        <begin position="1"/>
        <end position="164"/>
    </location>
</feature>
<feature type="splice variant" id="VSP_060001" description="In isoform 2.">
    <location>
        <begin position="1"/>
        <end position="98"/>
    </location>
</feature>
<feature type="splice variant" id="VSP_060002" description="In isoform 1.">
    <original>PCHLKGWQHRPTQHNAACKQG</original>
    <variation>MAEHRSMDGRMEAATRGGSHL</variation>
    <location>
        <begin position="165"/>
        <end position="185"/>
    </location>
</feature>
<feature type="sequence variant" id="VAR_028209" description="In dbSNP:rs11260579." evidence="4">
    <original>R</original>
    <variation>P</variation>
    <location>
        <position position="344"/>
    </location>
</feature>
<feature type="sequence variant" id="VAR_028210" description="In dbSNP:rs2228579." evidence="4">
    <original>E</original>
    <variation>Q</variation>
    <location>
        <position position="544"/>
    </location>
</feature>
<feature type="sequence variant" id="VAR_028211" description="In dbSNP:rs13306651.">
    <original>A</original>
    <variation>T</variation>
    <location>
        <position position="636"/>
    </location>
</feature>
<feature type="sequence variant" id="VAR_028212" description="In dbSNP:rs1053844." evidence="3 4 9">
    <original>C</original>
    <variation>Y</variation>
    <location>
        <position position="696"/>
    </location>
</feature>
<feature type="sequence variant" id="VAR_028213" description="In dbSNP:rs6690013." evidence="3">
    <original>G</original>
    <variation>S</variation>
    <location>
        <position position="726"/>
    </location>
</feature>
<feature type="sequence variant" id="VAR_028214" description="In dbSNP:rs609805." evidence="3">
    <original>G</original>
    <variation>R</variation>
    <location>
        <position position="770"/>
    </location>
</feature>
<feature type="sequence conflict" description="In Ref. 2; ABI64069." evidence="10" ref="2">
    <original>T</original>
    <variation>A</variation>
    <location>
        <position position="176"/>
    </location>
</feature>
<feature type="sequence conflict" description="In Ref. 2; ABI64069." evidence="10" ref="2">
    <original>Q</original>
    <variation>R</variation>
    <location>
        <position position="210"/>
    </location>
</feature>
<feature type="sequence conflict" description="In Ref. 2; ABI64069." evidence="10" ref="2">
    <original>V</original>
    <variation>A</variation>
    <location>
        <position position="424"/>
    </location>
</feature>
<feature type="sequence conflict" description="In Ref. 4; BAC04105." evidence="10" ref="4">
    <original>H</original>
    <variation>Y</variation>
    <location>
        <position position="444"/>
    </location>
</feature>
<feature type="sequence conflict" description="In Ref. 4; BAC04105." evidence="10" ref="4">
    <original>F</original>
    <variation>L</variation>
    <location>
        <position position="597"/>
    </location>
</feature>
<feature type="strand" evidence="16">
    <location>
        <begin position="294"/>
        <end position="298"/>
    </location>
</feature>
<feature type="helix" evidence="16">
    <location>
        <begin position="306"/>
        <end position="308"/>
    </location>
</feature>
<feature type="helix" evidence="16">
    <location>
        <begin position="309"/>
        <end position="326"/>
    </location>
</feature>
<feature type="strand" evidence="16">
    <location>
        <begin position="357"/>
        <end position="359"/>
    </location>
</feature>
<feature type="strand" evidence="16">
    <location>
        <begin position="369"/>
        <end position="375"/>
    </location>
</feature>
<feature type="strand" evidence="16">
    <location>
        <begin position="378"/>
        <end position="388"/>
    </location>
</feature>
<feature type="helix" evidence="16">
    <location>
        <begin position="389"/>
        <end position="405"/>
    </location>
</feature>
<feature type="strand" evidence="16">
    <location>
        <begin position="408"/>
        <end position="411"/>
    </location>
</feature>
<feature type="strand" evidence="16">
    <location>
        <begin position="423"/>
        <end position="429"/>
    </location>
</feature>
<feature type="strand" evidence="16">
    <location>
        <begin position="432"/>
        <end position="434"/>
    </location>
</feature>
<feature type="helix" evidence="16">
    <location>
        <begin position="436"/>
        <end position="438"/>
    </location>
</feature>
<feature type="strand" evidence="16">
    <location>
        <begin position="439"/>
        <end position="444"/>
    </location>
</feature>
<feature type="turn" evidence="16">
    <location>
        <begin position="445"/>
        <end position="447"/>
    </location>
</feature>
<feature type="strand" evidence="16">
    <location>
        <begin position="448"/>
        <end position="452"/>
    </location>
</feature>
<feature type="strand" evidence="16">
    <location>
        <begin position="461"/>
        <end position="463"/>
    </location>
</feature>
<feature type="helix" evidence="16">
    <location>
        <begin position="464"/>
        <end position="466"/>
    </location>
</feature>
<feature type="strand" evidence="16">
    <location>
        <begin position="467"/>
        <end position="473"/>
    </location>
</feature>
<feature type="strand" evidence="16">
    <location>
        <begin position="477"/>
        <end position="479"/>
    </location>
</feature>
<feature type="turn" evidence="16">
    <location>
        <begin position="481"/>
        <end position="483"/>
    </location>
</feature>
<feature type="strand" evidence="16">
    <location>
        <begin position="487"/>
        <end position="494"/>
    </location>
</feature>
<feature type="turn" evidence="16">
    <location>
        <begin position="500"/>
        <end position="503"/>
    </location>
</feature>
<feature type="strand" evidence="16">
    <location>
        <begin position="507"/>
        <end position="509"/>
    </location>
</feature>
<feature type="strand" evidence="16">
    <location>
        <begin position="513"/>
        <end position="525"/>
    </location>
</feature>
<feature type="strand" evidence="16">
    <location>
        <begin position="539"/>
        <end position="541"/>
    </location>
</feature>
<feature type="strand" evidence="16">
    <location>
        <begin position="546"/>
        <end position="549"/>
    </location>
</feature>
<feature type="helix" evidence="16">
    <location>
        <begin position="553"/>
        <end position="569"/>
    </location>
</feature>
<feature type="strand" evidence="16">
    <location>
        <begin position="570"/>
        <end position="572"/>
    </location>
</feature>
<feature type="turn" evidence="16">
    <location>
        <begin position="587"/>
        <end position="589"/>
    </location>
</feature>
<feature type="helix" evidence="16">
    <location>
        <begin position="593"/>
        <end position="605"/>
    </location>
</feature>
<feature type="helix" evidence="16">
    <location>
        <begin position="611"/>
        <end position="614"/>
    </location>
</feature>
<feature type="strand" evidence="16">
    <location>
        <begin position="618"/>
        <end position="632"/>
    </location>
</feature>
<feature type="turn" evidence="16">
    <location>
        <begin position="636"/>
        <end position="638"/>
    </location>
</feature>
<feature type="helix" evidence="16">
    <location>
        <begin position="639"/>
        <end position="648"/>
    </location>
</feature>
<feature type="strand" evidence="16">
    <location>
        <begin position="662"/>
        <end position="669"/>
    </location>
</feature>
<sequence length="802" mass="87850">MRAVLSQKTTPLPRYLWPGHLSGPRRLTWSWCSDHRTPTCRELGSPHPTPCTGPARGWPRRGGGPCGFTSAGHVLCGYPLCLLSGPIQGCGTGLGDSSMAFLSRTSPVAAASFQSRQEARGSILLQSCQLPPQWLSTEAWTGEWKQPHGGALTSRSPGPVAPQRPCHLKGWQHRPTQHNAACKQGQAAAQTPPRPGPPSAPPPPPKEGHQEGLVELPASFRELLTFFCTNATIHGAIRLVCSRGNRLKTTSWGLLSLGALVALCWQLGLLFERHWHRPVLMAVSVHSERKLLPLVTLCDGNPRRPSPVLRHLELLDEFARENIDSLYNVNLSKGRAALSATVPRHEPPFHLDREIRLQRLSHSGSRVRVGFRLCNSTGGDCFYRGYTSGVAAVQDWYHFHYVDILALLPAAWEDSHGSQDGHFVLSCSYDGLDCQARQFRTFHHPTYGSCYTVDGVWTAQRPGITHGVGLVLRVEQQPHLPLLSTLAGIRVMVHGRNHTPFLGHHSFSVRPGTEATISIREDEVHRLGSPYGHCTAGGEGVEVELLHNTSYTRQACLVSCFQQLMVETCSCGYYLHPLPAGAEYCSSARHPAWGHCFYRLYQDLETHRLPCTSRCPRPCRESAFKLSTGTSRWPSAKSAGWTLATLGEQGLPHQSHRQRSSLAKINIVYQELNYRSVEEAPVYSVPQLLSAMGSLCSLWFGASVLSLLELLELLLDASALTLVLGGRRLRRAWFSWPRASPASGASSIKPEASQMPPPAGGTSDDPEPSGPHLPRVMLPGVLAGVSAEESWAGPQPLETLDT</sequence>
<comment type="function">
    <text evidence="5 6 7 9">Potential alternative pore-forming subunit of the epithelial sodium channel (ENaC), capable of replacing the alpha/SCNN1A subunit, creating a more active channel with distinct properties (PubMed:16423824, PubMed:19520916, PubMed:22505667). ENaC functions in epithelial tissues, where it facilitates the electrodiffusion of sodium ions from the extracellular fluid through the apical membrane of cells, with water following osmotically, regulating sodium balance and fluid homeostasis (PubMed:16423824, PubMed:19520916, PubMed:7499195). This subunit could also function independently as a sodium channel or assemble into other tissue-specific heterotrimeric sodium channels (PubMed:7499195).</text>
</comment>
<comment type="function">
    <molecule>Isoform 2</molecule>
    <text evidence="7">ENaC channels including this isoform exhibit greater conductance.</text>
</comment>
<comment type="catalytic activity">
    <reaction evidence="5 6 9">
        <text>Na(+)(in) = Na(+)(out)</text>
        <dbReference type="Rhea" id="RHEA:34963"/>
        <dbReference type="ChEBI" id="CHEBI:29101"/>
    </reaction>
</comment>
<comment type="activity regulation">
    <text evidence="5 6 7 9">Originally identified and characterized by its inhibition by the diuretic drug amiloride.</text>
</comment>
<comment type="subunit">
    <text evidence="5 9">Can form an alternative heterotrimeric epithelial sodium channel (ENaC), composed of a delta (SCNN1D), beta (SCNN1B), and gamma (SCNN1G) subunit, where the delta (SCNN1D) subunit replaces the alpha (SCNN1A) subunit.</text>
</comment>
<comment type="interaction">
    <interactant intactId="EBI-2547114">
        <id>P51172</id>
    </interactant>
    <interactant intactId="EBI-1550112">
        <id>Q8N668</id>
        <label>COMMD1</label>
    </interactant>
    <organismsDiffer>false</organismsDiffer>
    <experiments>3</experiments>
</comment>
<comment type="subcellular location">
    <subcellularLocation>
        <location evidence="6">Apical cell membrane</location>
        <topology evidence="6">Multi-pass membrane protein</topology>
    </subcellularLocation>
</comment>
<comment type="alternative products">
    <event type="alternative splicing"/>
    <isoform>
        <id>P51172-3</id>
        <name>3</name>
        <sequence type="displayed"/>
    </isoform>
    <isoform>
        <id>P51172-1</id>
        <name>1</name>
        <name>delta1</name>
        <sequence type="described" ref="VSP_060000 VSP_060002"/>
    </isoform>
    <isoform>
        <id>P51172-2</id>
        <name>2</name>
        <name>delta2</name>
        <sequence type="described" ref="VSP_060001"/>
    </isoform>
</comment>
<comment type="tissue specificity">
    <text evidence="7 9">Not specifically expressed in epithelial cells.</text>
</comment>
<comment type="miscellaneous">
    <text evidence="8">The additional delta/SCNN1D subunit exists only in some organisms.</text>
</comment>
<comment type="similarity">
    <text evidence="10">Belongs to the amiloride-sensitive sodium channel (TC 1.A.6) family. SCNN1D subfamily.</text>
</comment>
<gene>
    <name evidence="15" type="primary">SCNN1D</name>
    <name evidence="14" type="synonym">DNACH</name>
</gene>
<reference key="1">
    <citation type="journal article" date="1995" name="J. Biol. Chem.">
        <title>Molecular cloning and functional expression of a novel amiloride-sensitive Na+ channel.</title>
        <authorList>
            <person name="Waldmann R."/>
            <person name="Champigny G."/>
            <person name="Bassilana F."/>
            <person name="Voilley N."/>
            <person name="Lazdunski M."/>
        </authorList>
    </citation>
    <scope>NUCLEOTIDE SEQUENCE [MRNA] (ISOFORM 1)</scope>
    <scope>VARIANT TYR-696</scope>
    <scope>FUNCTION</scope>
    <scope>TRANSPORTER ACTIVITY</scope>
    <scope>ACTIVITY REGULATION</scope>
    <scope>SUBUNIT</scope>
    <scope>SUBCELLULAR LOCATION</scope>
    <scope>TISSUE SPECIFICITY</scope>
</reference>
<reference key="2">
    <citation type="journal article" date="2006" name="J. Biol. Chem.">
        <title>Delta-subunit confers novel biophysical features to alpha beta gamma-human epithelial sodium channel (ENaC) via a physical interaction.</title>
        <authorList>
            <person name="Ji H.L."/>
            <person name="Su X.F."/>
            <person name="Kedar S."/>
            <person name="Li J."/>
            <person name="Barbry P."/>
            <person name="Smith P.R."/>
            <person name="Matalon S."/>
            <person name="Benos D.J."/>
        </authorList>
    </citation>
    <scope>NUCLEOTIDE SEQUENCE [MRNA] (ISOFORM 2)</scope>
    <scope>FUNCTION</scope>
    <scope>TRANSPORTER ACTIVITY</scope>
    <scope>ACTIVITY REGULATION</scope>
    <scope>SUBUNIT</scope>
    <scope>SUBCELLULAR LOCATION</scope>
    <source>
        <tissue>Lung</tissue>
    </source>
</reference>
<reference key="3">
    <citation type="journal article" date="2010" name="Am. J. Respir. Cell Mol. Biol.">
        <title>Characterization of the epithelial sodium channel delta-subunit in human nasal epithelium.</title>
        <authorList>
            <person name="Bangel-Ruland N."/>
            <person name="Sobczak K."/>
            <person name="Christmann T."/>
            <person name="Kentrup D."/>
            <person name="Langhorst H."/>
            <person name="Kusche-Vihrog K."/>
            <person name="Weber W.M."/>
        </authorList>
    </citation>
    <scope>NUCLEOTIDE SEQUENCE [MRNA] (ISOFORM 1)</scope>
    <scope>FUNCTION</scope>
    <scope>TRANSPORTER ACTIVITY</scope>
    <scope>ACTIVITY REGULATION</scope>
    <scope>SUBCELLULAR LOCATION</scope>
    <scope>TOPOLOGY</scope>
    <source>
        <tissue>Nasal epithelium</tissue>
    </source>
</reference>
<reference key="4">
    <citation type="journal article" date="2004" name="Nat. Genet.">
        <title>Complete sequencing and characterization of 21,243 full-length human cDNAs.</title>
        <authorList>
            <person name="Ota T."/>
            <person name="Suzuki Y."/>
            <person name="Nishikawa T."/>
            <person name="Otsuki T."/>
            <person name="Sugiyama T."/>
            <person name="Irie R."/>
            <person name="Wakamatsu A."/>
            <person name="Hayashi K."/>
            <person name="Sato H."/>
            <person name="Nagai K."/>
            <person name="Kimura K."/>
            <person name="Makita H."/>
            <person name="Sekine M."/>
            <person name="Obayashi M."/>
            <person name="Nishi T."/>
            <person name="Shibahara T."/>
            <person name="Tanaka T."/>
            <person name="Ishii S."/>
            <person name="Yamamoto J."/>
            <person name="Saito K."/>
            <person name="Kawai Y."/>
            <person name="Isono Y."/>
            <person name="Nakamura Y."/>
            <person name="Nagahari K."/>
            <person name="Murakami K."/>
            <person name="Yasuda T."/>
            <person name="Iwayanagi T."/>
            <person name="Wagatsuma M."/>
            <person name="Shiratori A."/>
            <person name="Sudo H."/>
            <person name="Hosoiri T."/>
            <person name="Kaku Y."/>
            <person name="Kodaira H."/>
            <person name="Kondo H."/>
            <person name="Sugawara M."/>
            <person name="Takahashi M."/>
            <person name="Kanda K."/>
            <person name="Yokoi T."/>
            <person name="Furuya T."/>
            <person name="Kikkawa E."/>
            <person name="Omura Y."/>
            <person name="Abe K."/>
            <person name="Kamihara K."/>
            <person name="Katsuta N."/>
            <person name="Sato K."/>
            <person name="Tanikawa M."/>
            <person name="Yamazaki M."/>
            <person name="Ninomiya K."/>
            <person name="Ishibashi T."/>
            <person name="Yamashita H."/>
            <person name="Murakawa K."/>
            <person name="Fujimori K."/>
            <person name="Tanai H."/>
            <person name="Kimata M."/>
            <person name="Watanabe M."/>
            <person name="Hiraoka S."/>
            <person name="Chiba Y."/>
            <person name="Ishida S."/>
            <person name="Ono Y."/>
            <person name="Takiguchi S."/>
            <person name="Watanabe S."/>
            <person name="Yosida M."/>
            <person name="Hotuta T."/>
            <person name="Kusano J."/>
            <person name="Kanehori K."/>
            <person name="Takahashi-Fujii A."/>
            <person name="Hara H."/>
            <person name="Tanase T.-O."/>
            <person name="Nomura Y."/>
            <person name="Togiya S."/>
            <person name="Komai F."/>
            <person name="Hara R."/>
            <person name="Takeuchi K."/>
            <person name="Arita M."/>
            <person name="Imose N."/>
            <person name="Musashino K."/>
            <person name="Yuuki H."/>
            <person name="Oshima A."/>
            <person name="Sasaki N."/>
            <person name="Aotsuka S."/>
            <person name="Yoshikawa Y."/>
            <person name="Matsunawa H."/>
            <person name="Ichihara T."/>
            <person name="Shiohata N."/>
            <person name="Sano S."/>
            <person name="Moriya S."/>
            <person name="Momiyama H."/>
            <person name="Satoh N."/>
            <person name="Takami S."/>
            <person name="Terashima Y."/>
            <person name="Suzuki O."/>
            <person name="Nakagawa S."/>
            <person name="Senoh A."/>
            <person name="Mizoguchi H."/>
            <person name="Goto Y."/>
            <person name="Shimizu F."/>
            <person name="Wakebe H."/>
            <person name="Hishigaki H."/>
            <person name="Watanabe T."/>
            <person name="Sugiyama A."/>
            <person name="Takemoto M."/>
            <person name="Kawakami B."/>
            <person name="Yamazaki M."/>
            <person name="Watanabe K."/>
            <person name="Kumagai A."/>
            <person name="Itakura S."/>
            <person name="Fukuzumi Y."/>
            <person name="Fujimori Y."/>
            <person name="Komiyama M."/>
            <person name="Tashiro H."/>
            <person name="Tanigami A."/>
            <person name="Fujiwara T."/>
            <person name="Ono T."/>
            <person name="Yamada K."/>
            <person name="Fujii Y."/>
            <person name="Ozaki K."/>
            <person name="Hirao M."/>
            <person name="Ohmori Y."/>
            <person name="Kawabata A."/>
            <person name="Hikiji T."/>
            <person name="Kobatake N."/>
            <person name="Inagaki H."/>
            <person name="Ikema Y."/>
            <person name="Okamoto S."/>
            <person name="Okitani R."/>
            <person name="Kawakami T."/>
            <person name="Noguchi S."/>
            <person name="Itoh T."/>
            <person name="Shigeta K."/>
            <person name="Senba T."/>
            <person name="Matsumura K."/>
            <person name="Nakajima Y."/>
            <person name="Mizuno T."/>
            <person name="Morinaga M."/>
            <person name="Sasaki M."/>
            <person name="Togashi T."/>
            <person name="Oyama M."/>
            <person name="Hata H."/>
            <person name="Watanabe M."/>
            <person name="Komatsu T."/>
            <person name="Mizushima-Sugano J."/>
            <person name="Satoh T."/>
            <person name="Shirai Y."/>
            <person name="Takahashi Y."/>
            <person name="Nakagawa K."/>
            <person name="Okumura K."/>
            <person name="Nagase T."/>
            <person name="Nomura N."/>
            <person name="Kikuchi H."/>
            <person name="Masuho Y."/>
            <person name="Yamashita R."/>
            <person name="Nakai K."/>
            <person name="Yada T."/>
            <person name="Nakamura Y."/>
            <person name="Ohara O."/>
            <person name="Isogai T."/>
            <person name="Sugano S."/>
        </authorList>
    </citation>
    <scope>NUCLEOTIDE SEQUENCE [LARGE SCALE MRNA] (ISOFORMS 1 AND 2)</scope>
    <scope>VARIANTS SER-726 AND ARG-770</scope>
    <source>
        <tissue>Hippocampus</tissue>
        <tissue>Testis</tissue>
    </source>
</reference>
<reference key="5">
    <citation type="journal article" date="2006" name="Nature">
        <title>The DNA sequence and biological annotation of human chromosome 1.</title>
        <authorList>
            <person name="Gregory S.G."/>
            <person name="Barlow K.F."/>
            <person name="McLay K.E."/>
            <person name="Kaul R."/>
            <person name="Swarbreck D."/>
            <person name="Dunham A."/>
            <person name="Scott C.E."/>
            <person name="Howe K.L."/>
            <person name="Woodfine K."/>
            <person name="Spencer C.C.A."/>
            <person name="Jones M.C."/>
            <person name="Gillson C."/>
            <person name="Searle S."/>
            <person name="Zhou Y."/>
            <person name="Kokocinski F."/>
            <person name="McDonald L."/>
            <person name="Evans R."/>
            <person name="Phillips K."/>
            <person name="Atkinson A."/>
            <person name="Cooper R."/>
            <person name="Jones C."/>
            <person name="Hall R.E."/>
            <person name="Andrews T.D."/>
            <person name="Lloyd C."/>
            <person name="Ainscough R."/>
            <person name="Almeida J.P."/>
            <person name="Ambrose K.D."/>
            <person name="Anderson F."/>
            <person name="Andrew R.W."/>
            <person name="Ashwell R.I.S."/>
            <person name="Aubin K."/>
            <person name="Babbage A.K."/>
            <person name="Bagguley C.L."/>
            <person name="Bailey J."/>
            <person name="Beasley H."/>
            <person name="Bethel G."/>
            <person name="Bird C.P."/>
            <person name="Bray-Allen S."/>
            <person name="Brown J.Y."/>
            <person name="Brown A.J."/>
            <person name="Buckley D."/>
            <person name="Burton J."/>
            <person name="Bye J."/>
            <person name="Carder C."/>
            <person name="Chapman J.C."/>
            <person name="Clark S.Y."/>
            <person name="Clarke G."/>
            <person name="Clee C."/>
            <person name="Cobley V."/>
            <person name="Collier R.E."/>
            <person name="Corby N."/>
            <person name="Coville G.J."/>
            <person name="Davies J."/>
            <person name="Deadman R."/>
            <person name="Dunn M."/>
            <person name="Earthrowl M."/>
            <person name="Ellington A.G."/>
            <person name="Errington H."/>
            <person name="Frankish A."/>
            <person name="Frankland J."/>
            <person name="French L."/>
            <person name="Garner P."/>
            <person name="Garnett J."/>
            <person name="Gay L."/>
            <person name="Ghori M.R.J."/>
            <person name="Gibson R."/>
            <person name="Gilby L.M."/>
            <person name="Gillett W."/>
            <person name="Glithero R.J."/>
            <person name="Grafham D.V."/>
            <person name="Griffiths C."/>
            <person name="Griffiths-Jones S."/>
            <person name="Grocock R."/>
            <person name="Hammond S."/>
            <person name="Harrison E.S.I."/>
            <person name="Hart E."/>
            <person name="Haugen E."/>
            <person name="Heath P.D."/>
            <person name="Holmes S."/>
            <person name="Holt K."/>
            <person name="Howden P.J."/>
            <person name="Hunt A.R."/>
            <person name="Hunt S.E."/>
            <person name="Hunter G."/>
            <person name="Isherwood J."/>
            <person name="James R."/>
            <person name="Johnson C."/>
            <person name="Johnson D."/>
            <person name="Joy A."/>
            <person name="Kay M."/>
            <person name="Kershaw J.K."/>
            <person name="Kibukawa M."/>
            <person name="Kimberley A.M."/>
            <person name="King A."/>
            <person name="Knights A.J."/>
            <person name="Lad H."/>
            <person name="Laird G."/>
            <person name="Lawlor S."/>
            <person name="Leongamornlert D.A."/>
            <person name="Lloyd D.M."/>
            <person name="Loveland J."/>
            <person name="Lovell J."/>
            <person name="Lush M.J."/>
            <person name="Lyne R."/>
            <person name="Martin S."/>
            <person name="Mashreghi-Mohammadi M."/>
            <person name="Matthews L."/>
            <person name="Matthews N.S.W."/>
            <person name="McLaren S."/>
            <person name="Milne S."/>
            <person name="Mistry S."/>
            <person name="Moore M.J.F."/>
            <person name="Nickerson T."/>
            <person name="O'Dell C.N."/>
            <person name="Oliver K."/>
            <person name="Palmeiri A."/>
            <person name="Palmer S.A."/>
            <person name="Parker A."/>
            <person name="Patel D."/>
            <person name="Pearce A.V."/>
            <person name="Peck A.I."/>
            <person name="Pelan S."/>
            <person name="Phelps K."/>
            <person name="Phillimore B.J."/>
            <person name="Plumb R."/>
            <person name="Rajan J."/>
            <person name="Raymond C."/>
            <person name="Rouse G."/>
            <person name="Saenphimmachak C."/>
            <person name="Sehra H.K."/>
            <person name="Sheridan E."/>
            <person name="Shownkeen R."/>
            <person name="Sims S."/>
            <person name="Skuce C.D."/>
            <person name="Smith M."/>
            <person name="Steward C."/>
            <person name="Subramanian S."/>
            <person name="Sycamore N."/>
            <person name="Tracey A."/>
            <person name="Tromans A."/>
            <person name="Van Helmond Z."/>
            <person name="Wall M."/>
            <person name="Wallis J.M."/>
            <person name="White S."/>
            <person name="Whitehead S.L."/>
            <person name="Wilkinson J.E."/>
            <person name="Willey D.L."/>
            <person name="Williams H."/>
            <person name="Wilming L."/>
            <person name="Wray P.W."/>
            <person name="Wu Z."/>
            <person name="Coulson A."/>
            <person name="Vaudin M."/>
            <person name="Sulston J.E."/>
            <person name="Durbin R.M."/>
            <person name="Hubbard T."/>
            <person name="Wooster R."/>
            <person name="Dunham I."/>
            <person name="Carter N.P."/>
            <person name="McVean G."/>
            <person name="Ross M.T."/>
            <person name="Harrow J."/>
            <person name="Olson M.V."/>
            <person name="Beck S."/>
            <person name="Rogers J."/>
            <person name="Bentley D.R."/>
        </authorList>
    </citation>
    <scope>NUCLEOTIDE SEQUENCE [LARGE SCALE GENOMIC DNA]</scope>
</reference>
<reference key="6">
    <citation type="journal article" date="2004" name="Genome Res.">
        <title>The status, quality, and expansion of the NIH full-length cDNA project: the Mammalian Gene Collection (MGC).</title>
        <authorList>
            <consortium name="The MGC Project Team"/>
        </authorList>
    </citation>
    <scope>NUCLEOTIDE SEQUENCE [LARGE SCALE MRNA] (ISOFORM 1)</scope>
    <scope>VARIANTS PRO-344 AND GLN-544</scope>
    <source>
        <tissue>Brain</tissue>
    </source>
</reference>
<reference key="7">
    <citation type="journal article" date="2012" name="Am. J. Physiol.">
        <title>Characterization of a novel splice variant of delta ENaC subunit in human lungs.</title>
        <authorList>
            <person name="Zhao R.Z."/>
            <person name="Nie H.G."/>
            <person name="Su X.F."/>
            <person name="Han D.Y."/>
            <person name="Lee A."/>
            <person name="Huang Y."/>
            <person name="Chang Y."/>
            <person name="Matalon S."/>
            <person name="Ji H.L."/>
        </authorList>
    </citation>
    <scope>ALTERNATIVE SPLICING (ISOFORM 2)</scope>
    <scope>FUNCTION (ISOFORM 2)</scope>
    <scope>TRANSPORTER ACTIVITY</scope>
    <scope>ACTIVITY REGULATION</scope>
    <scope>TISSUE SPECIFICITY</scope>
</reference>
<reference key="8">
    <citation type="journal article" date="2016" name="Gene">
        <title>Epithelial sodium channel (ENaC) family: Phylogeny, structure-function, tissue distribution, and associated inherited diseases.</title>
        <authorList>
            <person name="Hanukoglu I."/>
            <person name="Hanukoglu A."/>
        </authorList>
    </citation>
    <scope>PHYLOGENETIC ANALYSIS</scope>
    <scope>NOMENCLATURE</scope>
    <scope>MISCELLANEOUS</scope>
</reference>
<dbReference type="EMBL" id="U38254">
    <property type="protein sequence ID" value="AAC50283.1"/>
    <property type="molecule type" value="mRNA"/>
</dbReference>
<dbReference type="EMBL" id="DQ898176">
    <property type="protein sequence ID" value="ABI64069.1"/>
    <property type="molecule type" value="mRNA"/>
</dbReference>
<dbReference type="EMBL" id="EU489064">
    <property type="protein sequence ID" value="ACA51868.1"/>
    <property type="molecule type" value="mRNA"/>
</dbReference>
<dbReference type="EMBL" id="AK093239">
    <property type="protein sequence ID" value="BAC04105.1"/>
    <property type="molecule type" value="mRNA"/>
</dbReference>
<dbReference type="EMBL" id="AK127357">
    <property type="protein sequence ID" value="BAG54495.1"/>
    <property type="molecule type" value="mRNA"/>
</dbReference>
<dbReference type="EMBL" id="AL162741">
    <property type="status" value="NOT_ANNOTATED_CDS"/>
    <property type="molecule type" value="Genomic_DNA"/>
</dbReference>
<dbReference type="EMBL" id="BC036752">
    <property type="protein sequence ID" value="AAH36752.1"/>
    <property type="molecule type" value="mRNA"/>
</dbReference>
<dbReference type="EMBL" id="BC125074">
    <property type="protein sequence ID" value="AAI25075.1"/>
    <property type="molecule type" value="mRNA"/>
</dbReference>
<dbReference type="CCDS" id="CCDS44037.2">
    <molecule id="P51172-3"/>
</dbReference>
<dbReference type="PIR" id="I39196">
    <property type="entry name" value="I39196"/>
</dbReference>
<dbReference type="RefSeq" id="NP_001123885.2">
    <molecule id="P51172-3"/>
    <property type="nucleotide sequence ID" value="NM_001130413.4"/>
</dbReference>
<dbReference type="RefSeq" id="XP_011540227.1">
    <property type="nucleotide sequence ID" value="XM_011541925.2"/>
</dbReference>
<dbReference type="RefSeq" id="XP_011540234.1">
    <property type="nucleotide sequence ID" value="XM_011541932.2"/>
</dbReference>
<dbReference type="RefSeq" id="XP_011540235.1">
    <property type="nucleotide sequence ID" value="XM_011541933.2"/>
</dbReference>
<dbReference type="PDB" id="9BLR">
    <property type="method" value="EM"/>
    <property type="resolution" value="3.38 A"/>
    <property type="chains" value="A=172-802"/>
</dbReference>
<dbReference type="PDBsum" id="9BLR"/>
<dbReference type="EMDB" id="EMD-44674"/>
<dbReference type="SMR" id="P51172"/>
<dbReference type="BioGRID" id="112243">
    <property type="interactions" value="73"/>
</dbReference>
<dbReference type="ComplexPortal" id="CPX-312">
    <property type="entry name" value="Amiloride-sensitive sodium channel complex, delta-alpha-beta-gamma"/>
</dbReference>
<dbReference type="ComplexPortal" id="CPX-313">
    <property type="entry name" value="Amiloride-sensitive sodium channel complex, delta-beta-gamma"/>
</dbReference>
<dbReference type="CORUM" id="P51172"/>
<dbReference type="FunCoup" id="P51172">
    <property type="interactions" value="58"/>
</dbReference>
<dbReference type="IntAct" id="P51172">
    <property type="interactions" value="21"/>
</dbReference>
<dbReference type="STRING" id="9606.ENSP00000368411"/>
<dbReference type="DrugBank" id="DB00594">
    <property type="generic name" value="Amiloride"/>
</dbReference>
<dbReference type="DrugBank" id="DB00384">
    <property type="generic name" value="Triamterene"/>
</dbReference>
<dbReference type="TCDB" id="1.A.6.1.1">
    <property type="family name" value="the epithelial na(+) channel (enac) family"/>
</dbReference>
<dbReference type="GlyCosmos" id="P51172">
    <property type="glycosylation" value="2 sites, No reported glycans"/>
</dbReference>
<dbReference type="GlyGen" id="P51172">
    <property type="glycosylation" value="3 sites"/>
</dbReference>
<dbReference type="iPTMnet" id="P51172"/>
<dbReference type="PhosphoSitePlus" id="P51172"/>
<dbReference type="BioMuta" id="SCNN1D"/>
<dbReference type="DMDM" id="116242784"/>
<dbReference type="MassIVE" id="P51172"/>
<dbReference type="PaxDb" id="9606-ENSP00000368411"/>
<dbReference type="PeptideAtlas" id="P51172"/>
<dbReference type="ProteomicsDB" id="1607"/>
<dbReference type="ProteomicsDB" id="56298">
    <molecule id="P51172-1"/>
</dbReference>
<dbReference type="ProteomicsDB" id="56299">
    <molecule id="P51172-2"/>
</dbReference>
<dbReference type="Antibodypedia" id="4029">
    <property type="antibodies" value="253 antibodies from 31 providers"/>
</dbReference>
<dbReference type="DNASU" id="6339"/>
<dbReference type="Ensembl" id="ENST00000325425.12">
    <molecule id="P51172-2"/>
    <property type="protein sequence ID" value="ENSP00000321594.8"/>
    <property type="gene ID" value="ENSG00000162572.21"/>
</dbReference>
<dbReference type="Ensembl" id="ENST00000338555.6">
    <molecule id="P51172-1"/>
    <property type="protein sequence ID" value="ENSP00000339504.2"/>
    <property type="gene ID" value="ENSG00000162572.21"/>
</dbReference>
<dbReference type="Ensembl" id="ENST00000379116.10">
    <molecule id="P51172-3"/>
    <property type="protein sequence ID" value="ENSP00000368411.5"/>
    <property type="gene ID" value="ENSG00000162572.21"/>
</dbReference>
<dbReference type="Ensembl" id="ENST00000400928.7">
    <molecule id="P51172-1"/>
    <property type="protein sequence ID" value="ENSP00000383717.3"/>
    <property type="gene ID" value="ENSG00000162572.21"/>
</dbReference>
<dbReference type="GeneID" id="6339"/>
<dbReference type="KEGG" id="hsa:6339"/>
<dbReference type="MANE-Select" id="ENST00000379116.10">
    <property type="protein sequence ID" value="ENSP00000368411.5"/>
    <property type="RefSeq nucleotide sequence ID" value="NM_001130413.4"/>
    <property type="RefSeq protein sequence ID" value="NP_001123885.2"/>
</dbReference>
<dbReference type="UCSC" id="uc001adw.3">
    <molecule id="P51172-3"/>
    <property type="organism name" value="human"/>
</dbReference>
<dbReference type="AGR" id="HGNC:10601"/>
<dbReference type="CTD" id="6339"/>
<dbReference type="DisGeNET" id="6339"/>
<dbReference type="GeneCards" id="SCNN1D"/>
<dbReference type="HGNC" id="HGNC:10601">
    <property type="gene designation" value="SCNN1D"/>
</dbReference>
<dbReference type="HPA" id="ENSG00000162572">
    <property type="expression patterns" value="Tissue enhanced (brain, testis)"/>
</dbReference>
<dbReference type="MIM" id="601328">
    <property type="type" value="gene"/>
</dbReference>
<dbReference type="neXtProt" id="NX_P51172"/>
<dbReference type="OpenTargets" id="ENSG00000162572"/>
<dbReference type="PharmGKB" id="PA35011"/>
<dbReference type="VEuPathDB" id="HostDB:ENSG00000162572"/>
<dbReference type="eggNOG" id="KOG4294">
    <property type="taxonomic scope" value="Eukaryota"/>
</dbReference>
<dbReference type="GeneTree" id="ENSGT00940000162685"/>
<dbReference type="InParanoid" id="P51172"/>
<dbReference type="OMA" id="KPEASHM"/>
<dbReference type="OrthoDB" id="6238402at2759"/>
<dbReference type="PAN-GO" id="P51172">
    <property type="GO annotations" value="4 GO annotations based on evolutionary models"/>
</dbReference>
<dbReference type="PhylomeDB" id="P51172"/>
<dbReference type="TreeFam" id="TF330663"/>
<dbReference type="PathwayCommons" id="P51172"/>
<dbReference type="Reactome" id="R-HSA-2672351">
    <property type="pathway name" value="Stimuli-sensing channels"/>
</dbReference>
<dbReference type="Reactome" id="R-HSA-9730628">
    <property type="pathway name" value="Sensory perception of salty taste"/>
</dbReference>
<dbReference type="SignaLink" id="P51172"/>
<dbReference type="BioGRID-ORCS" id="6339">
    <property type="hits" value="18 hits in 1160 CRISPR screens"/>
</dbReference>
<dbReference type="GeneWiki" id="SCNN1D"/>
<dbReference type="GenomeRNAi" id="6339"/>
<dbReference type="Pharos" id="P51172">
    <property type="development level" value="Tbio"/>
</dbReference>
<dbReference type="PRO" id="PR:P51172"/>
<dbReference type="Proteomes" id="UP000005640">
    <property type="component" value="Chromosome 1"/>
</dbReference>
<dbReference type="RNAct" id="P51172">
    <property type="molecule type" value="protein"/>
</dbReference>
<dbReference type="Bgee" id="ENSG00000162572">
    <property type="expression patterns" value="Expressed in right hemisphere of cerebellum and 89 other cell types or tissues"/>
</dbReference>
<dbReference type="ExpressionAtlas" id="P51172">
    <property type="expression patterns" value="baseline and differential"/>
</dbReference>
<dbReference type="GO" id="GO:0015629">
    <property type="term" value="C:actin cytoskeleton"/>
    <property type="evidence" value="ECO:0000314"/>
    <property type="project" value="HPA"/>
</dbReference>
<dbReference type="GO" id="GO:0016324">
    <property type="term" value="C:apical plasma membrane"/>
    <property type="evidence" value="ECO:0000314"/>
    <property type="project" value="UniProtKB"/>
</dbReference>
<dbReference type="GO" id="GO:0016020">
    <property type="term" value="C:membrane"/>
    <property type="evidence" value="ECO:0000314"/>
    <property type="project" value="UniProtKB"/>
</dbReference>
<dbReference type="GO" id="GO:0005886">
    <property type="term" value="C:plasma membrane"/>
    <property type="evidence" value="ECO:0000314"/>
    <property type="project" value="HPA"/>
</dbReference>
<dbReference type="GO" id="GO:0034706">
    <property type="term" value="C:sodium channel complex"/>
    <property type="evidence" value="ECO:0000314"/>
    <property type="project" value="UniProtKB"/>
</dbReference>
<dbReference type="GO" id="GO:0015280">
    <property type="term" value="F:ligand-gated sodium channel activity"/>
    <property type="evidence" value="ECO:0000318"/>
    <property type="project" value="GO_Central"/>
</dbReference>
<dbReference type="GO" id="GO:0005272">
    <property type="term" value="F:sodium channel activity"/>
    <property type="evidence" value="ECO:0000314"/>
    <property type="project" value="UniProtKB"/>
</dbReference>
<dbReference type="GO" id="GO:0071468">
    <property type="term" value="P:cellular response to acidic pH"/>
    <property type="evidence" value="ECO:0000314"/>
    <property type="project" value="ComplexPortal"/>
</dbReference>
<dbReference type="GO" id="GO:1904045">
    <property type="term" value="P:cellular response to aldosterone"/>
    <property type="evidence" value="ECO:0000303"/>
    <property type="project" value="ComplexPortal"/>
</dbReference>
<dbReference type="GO" id="GO:1904117">
    <property type="term" value="P:cellular response to vasopressin"/>
    <property type="evidence" value="ECO:0000303"/>
    <property type="project" value="ComplexPortal"/>
</dbReference>
<dbReference type="GO" id="GO:0006883">
    <property type="term" value="P:intracellular sodium ion homeostasis"/>
    <property type="evidence" value="ECO:0000314"/>
    <property type="project" value="ComplexPortal"/>
</dbReference>
<dbReference type="GO" id="GO:0008217">
    <property type="term" value="P:regulation of blood pressure"/>
    <property type="evidence" value="ECO:0000303"/>
    <property type="project" value="ComplexPortal"/>
</dbReference>
<dbReference type="GO" id="GO:0050914">
    <property type="term" value="P:sensory perception of salty taste"/>
    <property type="evidence" value="ECO:0000303"/>
    <property type="project" value="ComplexPortal"/>
</dbReference>
<dbReference type="GO" id="GO:0050915">
    <property type="term" value="P:sensory perception of sour taste"/>
    <property type="evidence" value="ECO:0000303"/>
    <property type="project" value="ComplexPortal"/>
</dbReference>
<dbReference type="GO" id="GO:0098719">
    <property type="term" value="P:sodium ion import across plasma membrane"/>
    <property type="evidence" value="ECO:0000314"/>
    <property type="project" value="UniProtKB"/>
</dbReference>
<dbReference type="GO" id="GO:0035725">
    <property type="term" value="P:sodium ion transmembrane transport"/>
    <property type="evidence" value="ECO:0000318"/>
    <property type="project" value="GO_Central"/>
</dbReference>
<dbReference type="FunFam" id="2.60.470.10:FF:000007">
    <property type="entry name" value="Sodium channel epithelial 1 delta subunit"/>
    <property type="match status" value="1"/>
</dbReference>
<dbReference type="Gene3D" id="2.60.470.10">
    <property type="entry name" value="Acid-sensing ion channels like domains"/>
    <property type="match status" value="1"/>
</dbReference>
<dbReference type="Gene3D" id="1.10.287.770">
    <property type="entry name" value="YojJ-like"/>
    <property type="match status" value="1"/>
</dbReference>
<dbReference type="InterPro" id="IPR001873">
    <property type="entry name" value="ENaC"/>
</dbReference>
<dbReference type="InterPro" id="IPR004724">
    <property type="entry name" value="ENaC_chordates"/>
</dbReference>
<dbReference type="InterPro" id="IPR020903">
    <property type="entry name" value="ENaC_CS"/>
</dbReference>
<dbReference type="NCBIfam" id="TIGR00859">
    <property type="entry name" value="ENaC"/>
    <property type="match status" value="1"/>
</dbReference>
<dbReference type="PANTHER" id="PTHR11690:SF132">
    <property type="entry name" value="AMILORIDE-SENSITIVE SODIUM CHANNEL SUBUNIT DELTA"/>
    <property type="match status" value="1"/>
</dbReference>
<dbReference type="PANTHER" id="PTHR11690">
    <property type="entry name" value="AMILORIDE-SENSITIVE SODIUM CHANNEL-RELATED"/>
    <property type="match status" value="1"/>
</dbReference>
<dbReference type="Pfam" id="PF00858">
    <property type="entry name" value="ASC"/>
    <property type="match status" value="1"/>
</dbReference>
<dbReference type="PRINTS" id="PR01078">
    <property type="entry name" value="AMINACHANNEL"/>
</dbReference>
<dbReference type="PROSITE" id="PS01206">
    <property type="entry name" value="ASC"/>
    <property type="match status" value="1"/>
</dbReference>
<evidence type="ECO:0000255" key="1"/>
<evidence type="ECO:0000256" key="2">
    <source>
        <dbReference type="SAM" id="MobiDB-lite"/>
    </source>
</evidence>
<evidence type="ECO:0000269" key="3">
    <source>
    </source>
</evidence>
<evidence type="ECO:0000269" key="4">
    <source>
    </source>
</evidence>
<evidence type="ECO:0000269" key="5">
    <source>
    </source>
</evidence>
<evidence type="ECO:0000269" key="6">
    <source>
    </source>
</evidence>
<evidence type="ECO:0000269" key="7">
    <source>
    </source>
</evidence>
<evidence type="ECO:0000269" key="8">
    <source>
    </source>
</evidence>
<evidence type="ECO:0000269" key="9">
    <source>
    </source>
</evidence>
<evidence type="ECO:0000305" key="10"/>
<evidence type="ECO:0000305" key="11">
    <source>
    </source>
</evidence>
<evidence type="ECO:0000305" key="12">
    <source>
    </source>
</evidence>
<evidence type="ECO:0000305" key="13">
    <source>
    </source>
</evidence>
<evidence type="ECO:0000312" key="14">
    <source>
        <dbReference type="EMBL" id="AAC50283.1"/>
    </source>
</evidence>
<evidence type="ECO:0000312" key="15">
    <source>
        <dbReference type="HGNC" id="HGNC:10601"/>
    </source>
</evidence>
<evidence type="ECO:0007829" key="16">
    <source>
        <dbReference type="PDB" id="9BLR"/>
    </source>
</evidence>
<keyword id="KW-0002">3D-structure</keyword>
<keyword id="KW-0025">Alternative splicing</keyword>
<keyword id="KW-1003">Cell membrane</keyword>
<keyword id="KW-0325">Glycoprotein</keyword>
<keyword id="KW-0407">Ion channel</keyword>
<keyword id="KW-0406">Ion transport</keyword>
<keyword id="KW-0472">Membrane</keyword>
<keyword id="KW-1267">Proteomics identification</keyword>
<keyword id="KW-1185">Reference proteome</keyword>
<keyword id="KW-0915">Sodium</keyword>
<keyword id="KW-0894">Sodium channel</keyword>
<keyword id="KW-0739">Sodium transport</keyword>
<keyword id="KW-0812">Transmembrane</keyword>
<keyword id="KW-1133">Transmembrane helix</keyword>
<keyword id="KW-0813">Transport</keyword>
<organism>
    <name type="scientific">Homo sapiens</name>
    <name type="common">Human</name>
    <dbReference type="NCBI Taxonomy" id="9606"/>
    <lineage>
        <taxon>Eukaryota</taxon>
        <taxon>Metazoa</taxon>
        <taxon>Chordata</taxon>
        <taxon>Craniata</taxon>
        <taxon>Vertebrata</taxon>
        <taxon>Euteleostomi</taxon>
        <taxon>Mammalia</taxon>
        <taxon>Eutheria</taxon>
        <taxon>Euarchontoglires</taxon>
        <taxon>Primates</taxon>
        <taxon>Haplorrhini</taxon>
        <taxon>Catarrhini</taxon>
        <taxon>Hominidae</taxon>
        <taxon>Homo</taxon>
    </lineage>
</organism>
<accession>P51172</accession>
<accession>A6NNF7</accession>
<accession>A9Z1X6</accession>
<accession>B1PS44</accession>
<accession>B3KSD7</accession>
<accession>Q08AQ3</accession>
<accession>Q09HT0</accession>
<accession>Q5T7L3</accession>
<accession>Q8NA24</accession>